<sequence length="309" mass="35756">MARYDLVDRLNTTFRQMEQELAAFAAHLEQHKLLVARVFSLPEVKKEDEHNPLNRIEVKQHLGNDAQSQALRHFRHLFIQQQSENRSSKAAVRLPGVLCYQVDNLSQAALVSHIQHINKLKTTFEHIVTVESELPTAARFEWVHRHLPGLITLNAYRTLTVLHDPATLRFGWANKHIIKNLHRDEVLAQLEKSLKSPRSVAPWTREEWQRKLEREYQDIAALPQNAKLKIKRPVKVQPIARVWYKGDQKQVQHACPTPLIALINRDNGAGVPDVGELLNYDADNVQHRYKPQAQPLRLIIPRLHLYVAD</sequence>
<reference key="1">
    <citation type="journal article" date="2001" name="Nature">
        <title>Genome sequence of enterohaemorrhagic Escherichia coli O157:H7.</title>
        <authorList>
            <person name="Perna N.T."/>
            <person name="Plunkett G. III"/>
            <person name="Burland V."/>
            <person name="Mau B."/>
            <person name="Glasner J.D."/>
            <person name="Rose D.J."/>
            <person name="Mayhew G.F."/>
            <person name="Evans P.S."/>
            <person name="Gregor J."/>
            <person name="Kirkpatrick H.A."/>
            <person name="Posfai G."/>
            <person name="Hackett J."/>
            <person name="Klink S."/>
            <person name="Boutin A."/>
            <person name="Shao Y."/>
            <person name="Miller L."/>
            <person name="Grotbeck E.J."/>
            <person name="Davis N.W."/>
            <person name="Lim A."/>
            <person name="Dimalanta E.T."/>
            <person name="Potamousis K."/>
            <person name="Apodaca J."/>
            <person name="Anantharaman T.S."/>
            <person name="Lin J."/>
            <person name="Yen G."/>
            <person name="Schwartz D.C."/>
            <person name="Welch R.A."/>
            <person name="Blattner F.R."/>
        </authorList>
    </citation>
    <scope>NUCLEOTIDE SEQUENCE [LARGE SCALE GENOMIC DNA]</scope>
    <source>
        <strain>O157:H7 / EDL933 / ATCC 700927 / EHEC</strain>
    </source>
</reference>
<reference key="2">
    <citation type="journal article" date="2001" name="DNA Res.">
        <title>Complete genome sequence of enterohemorrhagic Escherichia coli O157:H7 and genomic comparison with a laboratory strain K-12.</title>
        <authorList>
            <person name="Hayashi T."/>
            <person name="Makino K."/>
            <person name="Ohnishi M."/>
            <person name="Kurokawa K."/>
            <person name="Ishii K."/>
            <person name="Yokoyama K."/>
            <person name="Han C.-G."/>
            <person name="Ohtsubo E."/>
            <person name="Nakayama K."/>
            <person name="Murata T."/>
            <person name="Tanaka M."/>
            <person name="Tobe T."/>
            <person name="Iida T."/>
            <person name="Takami H."/>
            <person name="Honda T."/>
            <person name="Sasakawa C."/>
            <person name="Ogasawara N."/>
            <person name="Yasunaga T."/>
            <person name="Kuhara S."/>
            <person name="Shiba T."/>
            <person name="Hattori M."/>
            <person name="Shinagawa H."/>
        </authorList>
    </citation>
    <scope>NUCLEOTIDE SEQUENCE [LARGE SCALE GENOMIC DNA]</scope>
    <source>
        <strain>O157:H7 / Sakai / RIMD 0509952 / EHEC</strain>
    </source>
</reference>
<gene>
    <name evidence="1" type="primary">tus</name>
    <name type="synonym">tau</name>
    <name type="ordered locus">Z2611</name>
    <name type="ordered locus">ECs2316</name>
</gene>
<keyword id="KW-0963">Cytoplasm</keyword>
<keyword id="KW-0235">DNA replication</keyword>
<keyword id="KW-0238">DNA-binding</keyword>
<keyword id="KW-1185">Reference proteome</keyword>
<organism>
    <name type="scientific">Escherichia coli O157:H7</name>
    <dbReference type="NCBI Taxonomy" id="83334"/>
    <lineage>
        <taxon>Bacteria</taxon>
        <taxon>Pseudomonadati</taxon>
        <taxon>Pseudomonadota</taxon>
        <taxon>Gammaproteobacteria</taxon>
        <taxon>Enterobacterales</taxon>
        <taxon>Enterobacteriaceae</taxon>
        <taxon>Escherichia</taxon>
    </lineage>
</organism>
<feature type="chain" id="PRO_0000049415" description="DNA replication terminus site-binding protein">
    <location>
        <begin position="1"/>
        <end position="309"/>
    </location>
</feature>
<protein>
    <recommendedName>
        <fullName evidence="1">DNA replication terminus site-binding protein</fullName>
        <shortName evidence="1">Ter-binding protein</shortName>
    </recommendedName>
</protein>
<comment type="function">
    <text evidence="1">Trans-acting protein required for termination of DNA replication. Binds to DNA replication terminator sequences (terA to terF) to prevent the passage of replication forks. The termination efficiency will be affected by the affinity of this protein for the terminator sequence.</text>
</comment>
<comment type="subcellular location">
    <subcellularLocation>
        <location evidence="1">Cytoplasm</location>
    </subcellularLocation>
</comment>
<comment type="similarity">
    <text evidence="1">Belongs to the Tus family.</text>
</comment>
<proteinExistence type="inferred from homology"/>
<accession>P58384</accession>
<dbReference type="EMBL" id="AE005174">
    <property type="protein sequence ID" value="AAG56597.1"/>
    <property type="molecule type" value="Genomic_DNA"/>
</dbReference>
<dbReference type="EMBL" id="BA000007">
    <property type="protein sequence ID" value="BAB35739.1"/>
    <property type="molecule type" value="Genomic_DNA"/>
</dbReference>
<dbReference type="PIR" id="A85767">
    <property type="entry name" value="A85767"/>
</dbReference>
<dbReference type="PIR" id="D90918">
    <property type="entry name" value="D90918"/>
</dbReference>
<dbReference type="RefSeq" id="NP_310343.1">
    <property type="nucleotide sequence ID" value="NC_002695.1"/>
</dbReference>
<dbReference type="RefSeq" id="WP_001322334.1">
    <property type="nucleotide sequence ID" value="NZ_VOAI01000007.1"/>
</dbReference>
<dbReference type="SMR" id="P58384"/>
<dbReference type="STRING" id="155864.Z2611"/>
<dbReference type="GeneID" id="916928"/>
<dbReference type="KEGG" id="ece:Z2611"/>
<dbReference type="KEGG" id="ecs:ECs_2316"/>
<dbReference type="PATRIC" id="fig|386585.9.peg.2426"/>
<dbReference type="eggNOG" id="ENOG502Z895">
    <property type="taxonomic scope" value="Bacteria"/>
</dbReference>
<dbReference type="HOGENOM" id="CLU_078181_0_0_6"/>
<dbReference type="OMA" id="FGWANKN"/>
<dbReference type="Proteomes" id="UP000000558">
    <property type="component" value="Chromosome"/>
</dbReference>
<dbReference type="Proteomes" id="UP000002519">
    <property type="component" value="Chromosome"/>
</dbReference>
<dbReference type="GO" id="GO:0005737">
    <property type="term" value="C:cytoplasm"/>
    <property type="evidence" value="ECO:0007669"/>
    <property type="project" value="UniProtKB-SubCell"/>
</dbReference>
<dbReference type="GO" id="GO:0003677">
    <property type="term" value="F:DNA binding"/>
    <property type="evidence" value="ECO:0007669"/>
    <property type="project" value="UniProtKB-UniRule"/>
</dbReference>
<dbReference type="GO" id="GO:0006274">
    <property type="term" value="P:DNA replication termination"/>
    <property type="evidence" value="ECO:0007669"/>
    <property type="project" value="UniProtKB-UniRule"/>
</dbReference>
<dbReference type="Gene3D" id="3.30.54.10">
    <property type="match status" value="1"/>
</dbReference>
<dbReference type="Gene3D" id="3.50.14.10">
    <property type="entry name" value="Replication terminator Tus, domain 1 superfamily/Replication terminator Tus"/>
    <property type="match status" value="1"/>
</dbReference>
<dbReference type="HAMAP" id="MF_00483">
    <property type="entry name" value="Rep_term_Tus"/>
    <property type="match status" value="1"/>
</dbReference>
<dbReference type="InterPro" id="IPR008865">
    <property type="entry name" value="DNA_replication_term_site-bd"/>
</dbReference>
<dbReference type="InterPro" id="IPR036381">
    <property type="entry name" value="Tus_dom1"/>
</dbReference>
<dbReference type="InterPro" id="IPR036384">
    <property type="entry name" value="Tus_sf"/>
</dbReference>
<dbReference type="NCBIfam" id="TIGR02648">
    <property type="entry name" value="rep_term_tus"/>
    <property type="match status" value="1"/>
</dbReference>
<dbReference type="Pfam" id="PF05472">
    <property type="entry name" value="Ter"/>
    <property type="match status" value="1"/>
</dbReference>
<dbReference type="SUPFAM" id="SSF56596">
    <property type="entry name" value="Replication terminator protein (Tus)"/>
    <property type="match status" value="1"/>
</dbReference>
<name>TUS_ECO57</name>
<evidence type="ECO:0000255" key="1">
    <source>
        <dbReference type="HAMAP-Rule" id="MF_00483"/>
    </source>
</evidence>